<organism>
    <name type="scientific">Pseudomonas savastanoi pv. phaseolicola (strain 1448A / Race 6)</name>
    <name type="common">Pseudomonas syringae pv. phaseolicola (strain 1448A / Race 6)</name>
    <dbReference type="NCBI Taxonomy" id="264730"/>
    <lineage>
        <taxon>Bacteria</taxon>
        <taxon>Pseudomonadati</taxon>
        <taxon>Pseudomonadota</taxon>
        <taxon>Gammaproteobacteria</taxon>
        <taxon>Pseudomonadales</taxon>
        <taxon>Pseudomonadaceae</taxon>
        <taxon>Pseudomonas</taxon>
    </lineage>
</organism>
<comment type="function">
    <text evidence="1">Catalyzes the rearrangement of 1-deoxy-D-xylulose 5-phosphate (DXP) to produce the thiazole phosphate moiety of thiamine. Sulfur is provided by the thiocarboxylate moiety of the carrier protein ThiS. In vitro, sulfur can be provided by H(2)S.</text>
</comment>
<comment type="catalytic activity">
    <reaction evidence="1">
        <text>[ThiS sulfur-carrier protein]-C-terminal-Gly-aminoethanethioate + 2-iminoacetate + 1-deoxy-D-xylulose 5-phosphate = [ThiS sulfur-carrier protein]-C-terminal Gly-Gly + 2-[(2R,5Z)-2-carboxy-4-methylthiazol-5(2H)-ylidene]ethyl phosphate + 2 H2O + H(+)</text>
        <dbReference type="Rhea" id="RHEA:26297"/>
        <dbReference type="Rhea" id="RHEA-COMP:12909"/>
        <dbReference type="Rhea" id="RHEA-COMP:19908"/>
        <dbReference type="ChEBI" id="CHEBI:15377"/>
        <dbReference type="ChEBI" id="CHEBI:15378"/>
        <dbReference type="ChEBI" id="CHEBI:57792"/>
        <dbReference type="ChEBI" id="CHEBI:62899"/>
        <dbReference type="ChEBI" id="CHEBI:77846"/>
        <dbReference type="ChEBI" id="CHEBI:90778"/>
        <dbReference type="ChEBI" id="CHEBI:232372"/>
        <dbReference type="EC" id="2.8.1.10"/>
    </reaction>
</comment>
<comment type="pathway">
    <text evidence="1">Cofactor biosynthesis; thiamine diphosphate biosynthesis.</text>
</comment>
<comment type="subunit">
    <text evidence="1">Homotetramer. Forms heterodimers with either ThiH or ThiS.</text>
</comment>
<comment type="subcellular location">
    <subcellularLocation>
        <location evidence="1">Cytoplasm</location>
    </subcellularLocation>
</comment>
<comment type="similarity">
    <text evidence="1">Belongs to the ThiG family.</text>
</comment>
<sequence length="264" mass="28293">MSNVRSDKPFVLAGRTFESRLLVGTGKYIDMEQTRLAIEASGAEIVTVAVRRTNLGQNPGEPNLLDVLPPDRYTILPNTAGCFDATEAVRTCRLSRELLDGRNLVKLEVLADQKTLFPNVIETLKAAEILVKDGFDVMVYTSDDPIIARQLAEIGCIAIMPLAGLIGSGLGICNPYNLQIILEETKVPVLVDAGVGTASDATIAMELGCEAVLMNSAIAHAQQPVMMAEAMKHAVIAGRLAYLAGRMPRKLYASASSPLDGLIK</sequence>
<dbReference type="EC" id="2.8.1.10" evidence="1"/>
<dbReference type="EMBL" id="CP000058">
    <property type="protein sequence ID" value="AAZ34823.1"/>
    <property type="molecule type" value="Genomic_DNA"/>
</dbReference>
<dbReference type="RefSeq" id="WP_003304387.1">
    <property type="nucleotide sequence ID" value="NC_005773.3"/>
</dbReference>
<dbReference type="SMR" id="Q48CL9"/>
<dbReference type="KEGG" id="psp:PSPPH_4774"/>
<dbReference type="eggNOG" id="COG2022">
    <property type="taxonomic scope" value="Bacteria"/>
</dbReference>
<dbReference type="HOGENOM" id="CLU_062233_1_1_6"/>
<dbReference type="UniPathway" id="UPA00060"/>
<dbReference type="Proteomes" id="UP000000551">
    <property type="component" value="Chromosome"/>
</dbReference>
<dbReference type="GO" id="GO:0005737">
    <property type="term" value="C:cytoplasm"/>
    <property type="evidence" value="ECO:0007669"/>
    <property type="project" value="UniProtKB-SubCell"/>
</dbReference>
<dbReference type="GO" id="GO:1990107">
    <property type="term" value="F:thiazole synthase activity"/>
    <property type="evidence" value="ECO:0007669"/>
    <property type="project" value="UniProtKB-EC"/>
</dbReference>
<dbReference type="GO" id="GO:0009229">
    <property type="term" value="P:thiamine diphosphate biosynthetic process"/>
    <property type="evidence" value="ECO:0007669"/>
    <property type="project" value="UniProtKB-UniRule"/>
</dbReference>
<dbReference type="CDD" id="cd04728">
    <property type="entry name" value="ThiG"/>
    <property type="match status" value="1"/>
</dbReference>
<dbReference type="Gene3D" id="3.20.20.70">
    <property type="entry name" value="Aldolase class I"/>
    <property type="match status" value="1"/>
</dbReference>
<dbReference type="HAMAP" id="MF_00443">
    <property type="entry name" value="ThiG"/>
    <property type="match status" value="1"/>
</dbReference>
<dbReference type="InterPro" id="IPR013785">
    <property type="entry name" value="Aldolase_TIM"/>
</dbReference>
<dbReference type="InterPro" id="IPR033983">
    <property type="entry name" value="Thiazole_synthase_ThiG"/>
</dbReference>
<dbReference type="InterPro" id="IPR008867">
    <property type="entry name" value="ThiG"/>
</dbReference>
<dbReference type="PANTHER" id="PTHR34266">
    <property type="entry name" value="THIAZOLE SYNTHASE"/>
    <property type="match status" value="1"/>
</dbReference>
<dbReference type="PANTHER" id="PTHR34266:SF2">
    <property type="entry name" value="THIAZOLE SYNTHASE"/>
    <property type="match status" value="1"/>
</dbReference>
<dbReference type="Pfam" id="PF05690">
    <property type="entry name" value="ThiG"/>
    <property type="match status" value="1"/>
</dbReference>
<dbReference type="SUPFAM" id="SSF110399">
    <property type="entry name" value="ThiG-like"/>
    <property type="match status" value="1"/>
</dbReference>
<gene>
    <name evidence="1" type="primary">thiG</name>
    <name type="ordered locus">PSPPH_4774</name>
</gene>
<keyword id="KW-0963">Cytoplasm</keyword>
<keyword id="KW-0704">Schiff base</keyword>
<keyword id="KW-0784">Thiamine biosynthesis</keyword>
<keyword id="KW-0808">Transferase</keyword>
<proteinExistence type="inferred from homology"/>
<reference key="1">
    <citation type="journal article" date="2005" name="J. Bacteriol.">
        <title>Whole-genome sequence analysis of Pseudomonas syringae pv. phaseolicola 1448A reveals divergence among pathovars in genes involved in virulence and transposition.</title>
        <authorList>
            <person name="Joardar V."/>
            <person name="Lindeberg M."/>
            <person name="Jackson R.W."/>
            <person name="Selengut J."/>
            <person name="Dodson R."/>
            <person name="Brinkac L.M."/>
            <person name="Daugherty S.C."/>
            <person name="DeBoy R.T."/>
            <person name="Durkin A.S."/>
            <person name="Gwinn Giglio M."/>
            <person name="Madupu R."/>
            <person name="Nelson W.C."/>
            <person name="Rosovitz M.J."/>
            <person name="Sullivan S.A."/>
            <person name="Crabtree J."/>
            <person name="Creasy T."/>
            <person name="Davidsen T.M."/>
            <person name="Haft D.H."/>
            <person name="Zafar N."/>
            <person name="Zhou L."/>
            <person name="Halpin R."/>
            <person name="Holley T."/>
            <person name="Khouri H.M."/>
            <person name="Feldblyum T.V."/>
            <person name="White O."/>
            <person name="Fraser C.M."/>
            <person name="Chatterjee A.K."/>
            <person name="Cartinhour S."/>
            <person name="Schneider D."/>
            <person name="Mansfield J.W."/>
            <person name="Collmer A."/>
            <person name="Buell R."/>
        </authorList>
    </citation>
    <scope>NUCLEOTIDE SEQUENCE [LARGE SCALE GENOMIC DNA]</scope>
    <source>
        <strain>1448A / Race 6</strain>
    </source>
</reference>
<protein>
    <recommendedName>
        <fullName evidence="1">Thiazole synthase</fullName>
        <ecNumber evidence="1">2.8.1.10</ecNumber>
    </recommendedName>
</protein>
<evidence type="ECO:0000255" key="1">
    <source>
        <dbReference type="HAMAP-Rule" id="MF_00443"/>
    </source>
</evidence>
<accession>Q48CL9</accession>
<name>THIG_PSE14</name>
<feature type="chain" id="PRO_0000236358" description="Thiazole synthase">
    <location>
        <begin position="1"/>
        <end position="264"/>
    </location>
</feature>
<feature type="active site" description="Schiff-base intermediate with DXP" evidence="1">
    <location>
        <position position="106"/>
    </location>
</feature>
<feature type="binding site" evidence="1">
    <location>
        <position position="167"/>
    </location>
    <ligand>
        <name>1-deoxy-D-xylulose 5-phosphate</name>
        <dbReference type="ChEBI" id="CHEBI:57792"/>
    </ligand>
</feature>
<feature type="binding site" evidence="1">
    <location>
        <begin position="193"/>
        <end position="194"/>
    </location>
    <ligand>
        <name>1-deoxy-D-xylulose 5-phosphate</name>
        <dbReference type="ChEBI" id="CHEBI:57792"/>
    </ligand>
</feature>
<feature type="binding site" evidence="1">
    <location>
        <begin position="215"/>
        <end position="216"/>
    </location>
    <ligand>
        <name>1-deoxy-D-xylulose 5-phosphate</name>
        <dbReference type="ChEBI" id="CHEBI:57792"/>
    </ligand>
</feature>